<name>NFUA_SHEPW</name>
<comment type="function">
    <text evidence="1">Involved in iron-sulfur cluster biogenesis. Binds a 4Fe-4S cluster, can transfer this cluster to apoproteins, and thereby intervenes in the maturation of Fe/S proteins. Could also act as a scaffold/chaperone for damaged Fe/S proteins.</text>
</comment>
<comment type="cofactor">
    <cofactor evidence="1">
        <name>[4Fe-4S] cluster</name>
        <dbReference type="ChEBI" id="CHEBI:49883"/>
    </cofactor>
    <text evidence="1">Binds 1 [4Fe-4S] cluster per subunit. The cluster is presumably bound at the interface of two monomers.</text>
</comment>
<comment type="subunit">
    <text evidence="1">Homodimer.</text>
</comment>
<comment type="similarity">
    <text evidence="1">Belongs to the NfuA family.</text>
</comment>
<reference key="1">
    <citation type="journal article" date="2008" name="PLoS ONE">
        <title>Environmental adaptation: genomic analysis of the piezotolerant and psychrotolerant deep-sea iron reducing bacterium Shewanella piezotolerans WP3.</title>
        <authorList>
            <person name="Wang F."/>
            <person name="Wang J."/>
            <person name="Jian H."/>
            <person name="Zhang B."/>
            <person name="Li S."/>
            <person name="Wang F."/>
            <person name="Zeng X."/>
            <person name="Gao L."/>
            <person name="Bartlett D.H."/>
            <person name="Yu J."/>
            <person name="Hu S."/>
            <person name="Xiao X."/>
        </authorList>
    </citation>
    <scope>NUCLEOTIDE SEQUENCE [LARGE SCALE GENOMIC DNA]</scope>
    <source>
        <strain>WP3 / JCM 13877</strain>
    </source>
</reference>
<sequence length="192" mass="20739">MITISETAQAHFVNLLSDQPEGTHIRVFVISPGTAQAECGVSYCPPDAVEADDTELEFNGFNAMVDEKSAPFLEEATIDFVTDQLGSQLTLKAPNAKMRKVSGDAPLVERIEYVIQSEINPQLASHGGNIMLVEITEDGIAVLQFGGGCNGCSMVDVTLKDGIEKQLLDMFPGELTGVKDVTEHQHGDHSYQ</sequence>
<proteinExistence type="inferred from homology"/>
<accession>B8CUY8</accession>
<protein>
    <recommendedName>
        <fullName evidence="1">Fe/S biogenesis protein NfuA</fullName>
    </recommendedName>
</protein>
<dbReference type="EMBL" id="CP000472">
    <property type="protein sequence ID" value="ACJ31464.1"/>
    <property type="molecule type" value="Genomic_DNA"/>
</dbReference>
<dbReference type="RefSeq" id="WP_020914794.1">
    <property type="nucleotide sequence ID" value="NC_011566.1"/>
</dbReference>
<dbReference type="SMR" id="B8CUY8"/>
<dbReference type="STRING" id="225849.swp_4841"/>
<dbReference type="KEGG" id="swp:swp_4841"/>
<dbReference type="eggNOG" id="COG0316">
    <property type="taxonomic scope" value="Bacteria"/>
</dbReference>
<dbReference type="eggNOG" id="COG0694">
    <property type="taxonomic scope" value="Bacteria"/>
</dbReference>
<dbReference type="HOGENOM" id="CLU_094569_0_0_6"/>
<dbReference type="OrthoDB" id="9785450at2"/>
<dbReference type="Proteomes" id="UP000000753">
    <property type="component" value="Chromosome"/>
</dbReference>
<dbReference type="GO" id="GO:0051539">
    <property type="term" value="F:4 iron, 4 sulfur cluster binding"/>
    <property type="evidence" value="ECO:0007669"/>
    <property type="project" value="UniProtKB-UniRule"/>
</dbReference>
<dbReference type="GO" id="GO:0005506">
    <property type="term" value="F:iron ion binding"/>
    <property type="evidence" value="ECO:0007669"/>
    <property type="project" value="InterPro"/>
</dbReference>
<dbReference type="GO" id="GO:0016226">
    <property type="term" value="P:iron-sulfur cluster assembly"/>
    <property type="evidence" value="ECO:0007669"/>
    <property type="project" value="UniProtKB-UniRule"/>
</dbReference>
<dbReference type="GO" id="GO:0051604">
    <property type="term" value="P:protein maturation"/>
    <property type="evidence" value="ECO:0007669"/>
    <property type="project" value="UniProtKB-UniRule"/>
</dbReference>
<dbReference type="Gene3D" id="3.30.300.130">
    <property type="entry name" value="Fe-S cluster assembly (FSCA)"/>
    <property type="match status" value="1"/>
</dbReference>
<dbReference type="Gene3D" id="2.60.300.12">
    <property type="entry name" value="HesB-like domain"/>
    <property type="match status" value="1"/>
</dbReference>
<dbReference type="HAMAP" id="MF_01637">
    <property type="entry name" value="Fe_S_biogen_NfuA"/>
    <property type="match status" value="1"/>
</dbReference>
<dbReference type="InterPro" id="IPR017726">
    <property type="entry name" value="Fe/S_biogenesis_protein_NfuA"/>
</dbReference>
<dbReference type="InterPro" id="IPR000361">
    <property type="entry name" value="FeS_biogenesis"/>
</dbReference>
<dbReference type="InterPro" id="IPR034904">
    <property type="entry name" value="FSCA_dom_sf"/>
</dbReference>
<dbReference type="InterPro" id="IPR035903">
    <property type="entry name" value="HesB-like_dom_sf"/>
</dbReference>
<dbReference type="InterPro" id="IPR001075">
    <property type="entry name" value="NIF_FeS_clus_asmbl_NifU_C"/>
</dbReference>
<dbReference type="NCBIfam" id="NF008392">
    <property type="entry name" value="PRK11190.1"/>
    <property type="match status" value="1"/>
</dbReference>
<dbReference type="NCBIfam" id="TIGR03341">
    <property type="entry name" value="YhgI_GntY"/>
    <property type="match status" value="1"/>
</dbReference>
<dbReference type="PANTHER" id="PTHR11178:SF51">
    <property type="entry name" value="FE_S BIOGENESIS PROTEIN NFUA"/>
    <property type="match status" value="1"/>
</dbReference>
<dbReference type="PANTHER" id="PTHR11178">
    <property type="entry name" value="IRON-SULFUR CLUSTER SCAFFOLD PROTEIN NFU-RELATED"/>
    <property type="match status" value="1"/>
</dbReference>
<dbReference type="Pfam" id="PF01521">
    <property type="entry name" value="Fe-S_biosyn"/>
    <property type="match status" value="1"/>
</dbReference>
<dbReference type="Pfam" id="PF01106">
    <property type="entry name" value="NifU"/>
    <property type="match status" value="1"/>
</dbReference>
<dbReference type="SUPFAM" id="SSF117916">
    <property type="entry name" value="Fe-S cluster assembly (FSCA) domain-like"/>
    <property type="match status" value="1"/>
</dbReference>
<dbReference type="SUPFAM" id="SSF89360">
    <property type="entry name" value="HesB-like domain"/>
    <property type="match status" value="1"/>
</dbReference>
<gene>
    <name evidence="1" type="primary">nfuA</name>
    <name type="ordered locus">swp_4841</name>
</gene>
<feature type="chain" id="PRO_1000186780" description="Fe/S biogenesis protein NfuA">
    <location>
        <begin position="1"/>
        <end position="192"/>
    </location>
</feature>
<feature type="binding site" evidence="1">
    <location>
        <position position="149"/>
    </location>
    <ligand>
        <name>[4Fe-4S] cluster</name>
        <dbReference type="ChEBI" id="CHEBI:49883"/>
    </ligand>
</feature>
<feature type="binding site" evidence="1">
    <location>
        <position position="152"/>
    </location>
    <ligand>
        <name>[4Fe-4S] cluster</name>
        <dbReference type="ChEBI" id="CHEBI:49883"/>
    </ligand>
</feature>
<keyword id="KW-0004">4Fe-4S</keyword>
<keyword id="KW-0408">Iron</keyword>
<keyword id="KW-0411">Iron-sulfur</keyword>
<keyword id="KW-0479">Metal-binding</keyword>
<evidence type="ECO:0000255" key="1">
    <source>
        <dbReference type="HAMAP-Rule" id="MF_01637"/>
    </source>
</evidence>
<organism>
    <name type="scientific">Shewanella piezotolerans (strain WP3 / JCM 13877)</name>
    <dbReference type="NCBI Taxonomy" id="225849"/>
    <lineage>
        <taxon>Bacteria</taxon>
        <taxon>Pseudomonadati</taxon>
        <taxon>Pseudomonadota</taxon>
        <taxon>Gammaproteobacteria</taxon>
        <taxon>Alteromonadales</taxon>
        <taxon>Shewanellaceae</taxon>
        <taxon>Shewanella</taxon>
    </lineage>
</organism>